<reference key="1">
    <citation type="journal article" date="2005" name="Nature">
        <title>The map-based sequence of the rice genome.</title>
        <authorList>
            <consortium name="International rice genome sequencing project (IRGSP)"/>
        </authorList>
    </citation>
    <scope>NUCLEOTIDE SEQUENCE [LARGE SCALE GENOMIC DNA]</scope>
    <source>
        <strain>cv. Nipponbare</strain>
    </source>
</reference>
<reference key="2">
    <citation type="journal article" date="2008" name="Nucleic Acids Res.">
        <title>The rice annotation project database (RAP-DB): 2008 update.</title>
        <authorList>
            <consortium name="The rice annotation project (RAP)"/>
        </authorList>
    </citation>
    <scope>GENOME REANNOTATION</scope>
    <source>
        <strain>cv. Nipponbare</strain>
    </source>
</reference>
<reference key="3">
    <citation type="journal article" date="2013" name="Rice">
        <title>Improvement of the Oryza sativa Nipponbare reference genome using next generation sequence and optical map data.</title>
        <authorList>
            <person name="Kawahara Y."/>
            <person name="de la Bastide M."/>
            <person name="Hamilton J.P."/>
            <person name="Kanamori H."/>
            <person name="McCombie W.R."/>
            <person name="Ouyang S."/>
            <person name="Schwartz D.C."/>
            <person name="Tanaka T."/>
            <person name="Wu J."/>
            <person name="Zhou S."/>
            <person name="Childs K.L."/>
            <person name="Davidson R.M."/>
            <person name="Lin H."/>
            <person name="Quesada-Ocampo L."/>
            <person name="Vaillancourt B."/>
            <person name="Sakai H."/>
            <person name="Lee S.S."/>
            <person name="Kim J."/>
            <person name="Numa H."/>
            <person name="Itoh T."/>
            <person name="Buell C.R."/>
            <person name="Matsumoto T."/>
        </authorList>
    </citation>
    <scope>GENOME REANNOTATION</scope>
    <source>
        <strain>cv. Nipponbare</strain>
    </source>
</reference>
<reference key="4">
    <citation type="journal article" date="2005" name="PLoS Biol.">
        <title>The genomes of Oryza sativa: a history of duplications.</title>
        <authorList>
            <person name="Yu J."/>
            <person name="Wang J."/>
            <person name="Lin W."/>
            <person name="Li S."/>
            <person name="Li H."/>
            <person name="Zhou J."/>
            <person name="Ni P."/>
            <person name="Dong W."/>
            <person name="Hu S."/>
            <person name="Zeng C."/>
            <person name="Zhang J."/>
            <person name="Zhang Y."/>
            <person name="Li R."/>
            <person name="Xu Z."/>
            <person name="Li S."/>
            <person name="Li X."/>
            <person name="Zheng H."/>
            <person name="Cong L."/>
            <person name="Lin L."/>
            <person name="Yin J."/>
            <person name="Geng J."/>
            <person name="Li G."/>
            <person name="Shi J."/>
            <person name="Liu J."/>
            <person name="Lv H."/>
            <person name="Li J."/>
            <person name="Wang J."/>
            <person name="Deng Y."/>
            <person name="Ran L."/>
            <person name="Shi X."/>
            <person name="Wang X."/>
            <person name="Wu Q."/>
            <person name="Li C."/>
            <person name="Ren X."/>
            <person name="Wang J."/>
            <person name="Wang X."/>
            <person name="Li D."/>
            <person name="Liu D."/>
            <person name="Zhang X."/>
            <person name="Ji Z."/>
            <person name="Zhao W."/>
            <person name="Sun Y."/>
            <person name="Zhang Z."/>
            <person name="Bao J."/>
            <person name="Han Y."/>
            <person name="Dong L."/>
            <person name="Ji J."/>
            <person name="Chen P."/>
            <person name="Wu S."/>
            <person name="Liu J."/>
            <person name="Xiao Y."/>
            <person name="Bu D."/>
            <person name="Tan J."/>
            <person name="Yang L."/>
            <person name="Ye C."/>
            <person name="Zhang J."/>
            <person name="Xu J."/>
            <person name="Zhou Y."/>
            <person name="Yu Y."/>
            <person name="Zhang B."/>
            <person name="Zhuang S."/>
            <person name="Wei H."/>
            <person name="Liu B."/>
            <person name="Lei M."/>
            <person name="Yu H."/>
            <person name="Li Y."/>
            <person name="Xu H."/>
            <person name="Wei S."/>
            <person name="He X."/>
            <person name="Fang L."/>
            <person name="Zhang Z."/>
            <person name="Zhang Y."/>
            <person name="Huang X."/>
            <person name="Su Z."/>
            <person name="Tong W."/>
            <person name="Li J."/>
            <person name="Tong Z."/>
            <person name="Li S."/>
            <person name="Ye J."/>
            <person name="Wang L."/>
            <person name="Fang L."/>
            <person name="Lei T."/>
            <person name="Chen C.-S."/>
            <person name="Chen H.-C."/>
            <person name="Xu Z."/>
            <person name="Li H."/>
            <person name="Huang H."/>
            <person name="Zhang F."/>
            <person name="Xu H."/>
            <person name="Li N."/>
            <person name="Zhao C."/>
            <person name="Li S."/>
            <person name="Dong L."/>
            <person name="Huang Y."/>
            <person name="Li L."/>
            <person name="Xi Y."/>
            <person name="Qi Q."/>
            <person name="Li W."/>
            <person name="Zhang B."/>
            <person name="Hu W."/>
            <person name="Zhang Y."/>
            <person name="Tian X."/>
            <person name="Jiao Y."/>
            <person name="Liang X."/>
            <person name="Jin J."/>
            <person name="Gao L."/>
            <person name="Zheng W."/>
            <person name="Hao B."/>
            <person name="Liu S.-M."/>
            <person name="Wang W."/>
            <person name="Yuan L."/>
            <person name="Cao M."/>
            <person name="McDermott J."/>
            <person name="Samudrala R."/>
            <person name="Wang J."/>
            <person name="Wong G.K.-S."/>
            <person name="Yang H."/>
        </authorList>
    </citation>
    <scope>NUCLEOTIDE SEQUENCE [LARGE SCALE GENOMIC DNA]</scope>
    <source>
        <strain>cv. Nipponbare</strain>
    </source>
</reference>
<reference key="5">
    <citation type="journal article" date="2003" name="Science">
        <title>Collection, mapping, and annotation of over 28,000 cDNA clones from japonica rice.</title>
        <authorList>
            <consortium name="The rice full-length cDNA consortium"/>
        </authorList>
    </citation>
    <scope>NUCLEOTIDE SEQUENCE [LARGE SCALE MRNA]</scope>
    <source>
        <strain>cv. Nipponbare</strain>
    </source>
</reference>
<reference key="6">
    <citation type="journal article" date="2009" name="J. Exp. Bot.">
        <title>Inducible antisense suppression of glycolate oxidase reveals its strong regulation over photosynthesis in rice.</title>
        <authorList>
            <person name="Xu H.-W."/>
            <person name="Zhang J."/>
            <person name="Zeng J."/>
            <person name="Jiang L."/>
            <person name="Liu E."/>
            <person name="Peng C."/>
            <person name="He Z.-H."/>
            <person name="Peng X.-X."/>
        </authorList>
    </citation>
    <scope>GENE FAMILY</scope>
    <scope>NOMENCLATURE</scope>
</reference>
<reference key="7">
    <citation type="journal article" date="2016" name="Mol. Plant">
        <title>Association-dissociation of glycolate oxidase with catalase in rice: a potential switch to modulate intracellular H2O2 levels.</title>
        <authorList>
            <person name="Zhang Z."/>
            <person name="Xu Y."/>
            <person name="Xie Z."/>
            <person name="Li X."/>
            <person name="He Z.-H."/>
            <person name="Peng X.-X."/>
        </authorList>
    </citation>
    <scope>INTERACTION WITH CATB AND CATC</scope>
    <source>
        <strain>cv. Zhonghua 11</strain>
    </source>
</reference>
<comment type="function">
    <text evidence="3">Oxidase that catalyzes the oxidation of a broad range of 2-hydroxyacids to the corresponding 2-oxoacids, with a reduction of O2 to H2O2. May be involved in a general medium- and long-chain fatty acid catabolic pathway such as alpha-oxidation.</text>
</comment>
<comment type="catalytic activity">
    <reaction evidence="3">
        <text>a (2S)-2-hydroxycarboxylate + O2 = a 2-oxocarboxylate + H2O2</text>
        <dbReference type="Rhea" id="RHEA:16789"/>
        <dbReference type="ChEBI" id="CHEBI:15379"/>
        <dbReference type="ChEBI" id="CHEBI:16240"/>
        <dbReference type="ChEBI" id="CHEBI:35179"/>
        <dbReference type="ChEBI" id="CHEBI:58123"/>
        <dbReference type="EC" id="1.1.3.15"/>
    </reaction>
    <physiologicalReaction direction="left-to-right" evidence="3">
        <dbReference type="Rhea" id="RHEA:16790"/>
    </physiologicalReaction>
</comment>
<comment type="cofactor">
    <cofactor evidence="2">
        <name>FMN</name>
        <dbReference type="ChEBI" id="CHEBI:58210"/>
    </cofactor>
</comment>
<comment type="pathway">
    <text evidence="3">Lipid metabolism; fatty acid metabolism.</text>
</comment>
<comment type="subunit">
    <text evidence="2">Homotetramer (By similarity). Binds to CATB and CATC; these interactions are disturbed by alpha-hydroxy-2-pyridinemethanesulfonic acid (HPMS) and salicylic acid (SA) (PubMed:26900141).</text>
</comment>
<comment type="subcellular location">
    <subcellularLocation>
        <location evidence="1">Peroxisome</location>
    </subcellularLocation>
</comment>
<comment type="similarity">
    <text evidence="5">Belongs to the FMN-dependent alpha-hydroxy acid dehydrogenase family.</text>
</comment>
<comment type="sequence caution" evidence="6">
    <conflict type="frameshift">
        <sequence resource="EMBL-CDS" id="EEE67592"/>
    </conflict>
</comment>
<feature type="chain" id="PRO_0000403415" description="Peroxisomal (S)-2-hydroxy-acid oxidase GLO4">
    <location>
        <begin position="1"/>
        <end position="366"/>
    </location>
</feature>
<feature type="domain" description="FMN hydroxy acid dehydrogenase" evidence="5">
    <location>
        <begin position="1"/>
        <end position="360"/>
    </location>
</feature>
<feature type="short sequence motif" description="Microbody targeting signal" evidence="4">
    <location>
        <begin position="364"/>
        <end position="366"/>
    </location>
</feature>
<feature type="active site" description="Proton acceptor" evidence="2">
    <location>
        <position position="255"/>
    </location>
</feature>
<feature type="binding site" evidence="5">
    <location>
        <position position="27"/>
    </location>
    <ligand>
        <name>a 2-oxocarboxylate</name>
        <dbReference type="ChEBI" id="CHEBI:35179"/>
    </ligand>
</feature>
<feature type="binding site" evidence="2">
    <location>
        <begin position="80"/>
        <end position="82"/>
    </location>
    <ligand>
        <name>FMN</name>
        <dbReference type="ChEBI" id="CHEBI:58210"/>
    </ligand>
</feature>
<feature type="binding site" evidence="2">
    <location>
        <position position="109"/>
    </location>
    <ligand>
        <name>FMN</name>
        <dbReference type="ChEBI" id="CHEBI:58210"/>
    </ligand>
</feature>
<feature type="binding site" evidence="2">
    <location>
        <begin position="130"/>
        <end position="132"/>
    </location>
    <ligand>
        <name>FMN</name>
        <dbReference type="ChEBI" id="CHEBI:58210"/>
    </ligand>
</feature>
<feature type="binding site" evidence="5">
    <location>
        <position position="132"/>
    </location>
    <ligand>
        <name>a 2-oxocarboxylate</name>
        <dbReference type="ChEBI" id="CHEBI:35179"/>
    </ligand>
</feature>
<feature type="binding site" evidence="2">
    <location>
        <position position="158"/>
    </location>
    <ligand>
        <name>FMN</name>
        <dbReference type="ChEBI" id="CHEBI:58210"/>
    </ligand>
</feature>
<feature type="binding site" evidence="5">
    <location>
        <position position="167"/>
    </location>
    <ligand>
        <name>a 2-oxocarboxylate</name>
        <dbReference type="ChEBI" id="CHEBI:35179"/>
    </ligand>
</feature>
<feature type="binding site" evidence="2">
    <location>
        <position position="231"/>
    </location>
    <ligand>
        <name>FMN</name>
        <dbReference type="ChEBI" id="CHEBI:58210"/>
    </ligand>
</feature>
<feature type="binding site" evidence="2">
    <location>
        <position position="253"/>
    </location>
    <ligand>
        <name>FMN</name>
        <dbReference type="ChEBI" id="CHEBI:58210"/>
    </ligand>
</feature>
<feature type="binding site" evidence="5">
    <location>
        <position position="258"/>
    </location>
    <ligand>
        <name>a 2-oxocarboxylate</name>
        <dbReference type="ChEBI" id="CHEBI:35179"/>
    </ligand>
</feature>
<feature type="binding site" evidence="2">
    <location>
        <begin position="286"/>
        <end position="290"/>
    </location>
    <ligand>
        <name>FMN</name>
        <dbReference type="ChEBI" id="CHEBI:58210"/>
    </ligand>
</feature>
<feature type="binding site" evidence="2">
    <location>
        <begin position="309"/>
        <end position="310"/>
    </location>
    <ligand>
        <name>FMN</name>
        <dbReference type="ChEBI" id="CHEBI:58210"/>
    </ligand>
</feature>
<feature type="sequence conflict" description="In Ref. 4; EEE67592." evidence="6" ref="4">
    <original>F</original>
    <variation>L</variation>
    <location>
        <position position="313"/>
    </location>
</feature>
<feature type="sequence conflict" description="In Ref. 4; EEE67592." evidence="6" ref="4">
    <original>E</original>
    <variation>D</variation>
    <location>
        <position position="321"/>
    </location>
</feature>
<keyword id="KW-0276">Fatty acid metabolism</keyword>
<keyword id="KW-0285">Flavoprotein</keyword>
<keyword id="KW-0288">FMN</keyword>
<keyword id="KW-0443">Lipid metabolism</keyword>
<keyword id="KW-0560">Oxidoreductase</keyword>
<keyword id="KW-0576">Peroxisome</keyword>
<keyword id="KW-1185">Reference proteome</keyword>
<name>HAOX_ORYSJ</name>
<gene>
    <name type="primary">GLO4</name>
    <name type="ordered locus">Os07g0616500</name>
    <name type="ORF">B1056G08.112</name>
    <name type="ORF">OsJ_25131</name>
</gene>
<dbReference type="EC" id="1.1.3.15" evidence="3"/>
<dbReference type="EMBL" id="AP004988">
    <property type="protein sequence ID" value="BAC79990.1"/>
    <property type="molecule type" value="Genomic_DNA"/>
</dbReference>
<dbReference type="EMBL" id="AP008213">
    <property type="protein sequence ID" value="BAF22190.1"/>
    <property type="molecule type" value="Genomic_DNA"/>
</dbReference>
<dbReference type="EMBL" id="AP014963">
    <property type="protein sequence ID" value="BAT02654.1"/>
    <property type="molecule type" value="Genomic_DNA"/>
</dbReference>
<dbReference type="EMBL" id="CM000144">
    <property type="protein sequence ID" value="EEE67592.1"/>
    <property type="status" value="ALT_FRAME"/>
    <property type="molecule type" value="Genomic_DNA"/>
</dbReference>
<dbReference type="EMBL" id="AK071738">
    <property type="protein sequence ID" value="BAG92663.1"/>
    <property type="molecule type" value="mRNA"/>
</dbReference>
<dbReference type="RefSeq" id="XP_015647067.1">
    <property type="nucleotide sequence ID" value="XM_015791581.1"/>
</dbReference>
<dbReference type="RefSeq" id="XP_015647068.1">
    <property type="nucleotide sequence ID" value="XM_015791582.1"/>
</dbReference>
<dbReference type="RefSeq" id="XP_015647069.1">
    <property type="nucleotide sequence ID" value="XM_015791583.1"/>
</dbReference>
<dbReference type="RefSeq" id="XP_015647070.1">
    <property type="nucleotide sequence ID" value="XM_015791584.1"/>
</dbReference>
<dbReference type="SMR" id="Q8H3I4"/>
<dbReference type="FunCoup" id="Q8H3I4">
    <property type="interactions" value="1305"/>
</dbReference>
<dbReference type="STRING" id="39947.Q8H3I4"/>
<dbReference type="PaxDb" id="39947-Q8H3I4"/>
<dbReference type="EnsemblPlants" id="Os07t0616500-01">
    <property type="protein sequence ID" value="Os07t0616500-01"/>
    <property type="gene ID" value="Os07g0616500"/>
</dbReference>
<dbReference type="Gramene" id="Os07t0616500-01">
    <property type="protein sequence ID" value="Os07t0616500-01"/>
    <property type="gene ID" value="Os07g0616500"/>
</dbReference>
<dbReference type="KEGG" id="dosa:Os07g0616500"/>
<dbReference type="eggNOG" id="KOG0538">
    <property type="taxonomic scope" value="Eukaryota"/>
</dbReference>
<dbReference type="HOGENOM" id="CLU_020639_0_0_1"/>
<dbReference type="InParanoid" id="Q8H3I4"/>
<dbReference type="OMA" id="WADFQYE"/>
<dbReference type="OrthoDB" id="25826at2759"/>
<dbReference type="PlantReactome" id="R-OSA-1119312">
    <property type="pathway name" value="Photorespiration"/>
</dbReference>
<dbReference type="PlantReactome" id="R-OSA-1119596">
    <property type="pathway name" value="Glutamate biosynthesis I"/>
</dbReference>
<dbReference type="UniPathway" id="UPA00199"/>
<dbReference type="Proteomes" id="UP000000763">
    <property type="component" value="Chromosome 7"/>
</dbReference>
<dbReference type="Proteomes" id="UP000007752">
    <property type="component" value="Chromosome 7"/>
</dbReference>
<dbReference type="Proteomes" id="UP000059680">
    <property type="component" value="Chromosome 7"/>
</dbReference>
<dbReference type="GO" id="GO:0005777">
    <property type="term" value="C:peroxisome"/>
    <property type="evidence" value="ECO:0000250"/>
    <property type="project" value="UniProtKB"/>
</dbReference>
<dbReference type="GO" id="GO:0003973">
    <property type="term" value="F:(S)-2-hydroxy-acid oxidase activity"/>
    <property type="evidence" value="ECO:0000250"/>
    <property type="project" value="UniProtKB"/>
</dbReference>
<dbReference type="GO" id="GO:0010181">
    <property type="term" value="F:FMN binding"/>
    <property type="evidence" value="ECO:0007669"/>
    <property type="project" value="InterPro"/>
</dbReference>
<dbReference type="GO" id="GO:0006631">
    <property type="term" value="P:fatty acid metabolic process"/>
    <property type="evidence" value="ECO:0007669"/>
    <property type="project" value="UniProtKB-UniPathway"/>
</dbReference>
<dbReference type="GO" id="GO:0009853">
    <property type="term" value="P:photorespiration"/>
    <property type="evidence" value="ECO:0000250"/>
    <property type="project" value="UniProtKB"/>
</dbReference>
<dbReference type="GO" id="GO:0010109">
    <property type="term" value="P:regulation of photosynthesis"/>
    <property type="evidence" value="ECO:0000250"/>
    <property type="project" value="UniProtKB"/>
</dbReference>
<dbReference type="GO" id="GO:0051707">
    <property type="term" value="P:response to other organism"/>
    <property type="evidence" value="ECO:0007669"/>
    <property type="project" value="UniProtKB-ARBA"/>
</dbReference>
<dbReference type="GO" id="GO:0046718">
    <property type="term" value="P:symbiont entry into host cell"/>
    <property type="evidence" value="ECO:0000250"/>
    <property type="project" value="UniProtKB"/>
</dbReference>
<dbReference type="CDD" id="cd02809">
    <property type="entry name" value="alpha_hydroxyacid_oxid_FMN"/>
    <property type="match status" value="1"/>
</dbReference>
<dbReference type="FunFam" id="3.20.20.70:FF:000204">
    <property type="entry name" value="Peroxisomal (S)-2-hydroxy-acid oxidase GLO4"/>
    <property type="match status" value="1"/>
</dbReference>
<dbReference type="Gene3D" id="3.20.20.70">
    <property type="entry name" value="Aldolase class I"/>
    <property type="match status" value="1"/>
</dbReference>
<dbReference type="InterPro" id="IPR013785">
    <property type="entry name" value="Aldolase_TIM"/>
</dbReference>
<dbReference type="InterPro" id="IPR012133">
    <property type="entry name" value="Alpha-hydoxy_acid_DH_FMN"/>
</dbReference>
<dbReference type="InterPro" id="IPR000262">
    <property type="entry name" value="FMN-dep_DH"/>
</dbReference>
<dbReference type="InterPro" id="IPR037396">
    <property type="entry name" value="FMN_HAD"/>
</dbReference>
<dbReference type="InterPro" id="IPR008259">
    <property type="entry name" value="FMN_hydac_DH_AS"/>
</dbReference>
<dbReference type="PANTHER" id="PTHR10578:SF67">
    <property type="entry name" value="PEROXISOMAL (S)-2-HYDROXYACID OXIDASE GLO3"/>
    <property type="match status" value="1"/>
</dbReference>
<dbReference type="PANTHER" id="PTHR10578">
    <property type="entry name" value="S -2-HYDROXY-ACID OXIDASE-RELATED"/>
    <property type="match status" value="1"/>
</dbReference>
<dbReference type="Pfam" id="PF01070">
    <property type="entry name" value="FMN_dh"/>
    <property type="match status" value="1"/>
</dbReference>
<dbReference type="PIRSF" id="PIRSF000138">
    <property type="entry name" value="Al-hdrx_acd_dh"/>
    <property type="match status" value="1"/>
</dbReference>
<dbReference type="SMART" id="SM01240">
    <property type="entry name" value="IMPDH"/>
    <property type="match status" value="1"/>
</dbReference>
<dbReference type="SUPFAM" id="SSF51395">
    <property type="entry name" value="FMN-linked oxidoreductases"/>
    <property type="match status" value="1"/>
</dbReference>
<dbReference type="PROSITE" id="PS00557">
    <property type="entry name" value="FMN_HYDROXY_ACID_DH_1"/>
    <property type="match status" value="1"/>
</dbReference>
<dbReference type="PROSITE" id="PS51349">
    <property type="entry name" value="FMN_HYDROXY_ACID_DH_2"/>
    <property type="match status" value="1"/>
</dbReference>
<evidence type="ECO:0000250" key="1"/>
<evidence type="ECO:0000250" key="2">
    <source>
        <dbReference type="UniProtKB" id="P05414"/>
    </source>
</evidence>
<evidence type="ECO:0000250" key="3">
    <source>
        <dbReference type="UniProtKB" id="Q9LJH5"/>
    </source>
</evidence>
<evidence type="ECO:0000255" key="4"/>
<evidence type="ECO:0000255" key="5">
    <source>
        <dbReference type="PROSITE-ProRule" id="PRU00683"/>
    </source>
</evidence>
<evidence type="ECO:0000305" key="6"/>
<organism>
    <name type="scientific">Oryza sativa subsp. japonica</name>
    <name type="common">Rice</name>
    <dbReference type="NCBI Taxonomy" id="39947"/>
    <lineage>
        <taxon>Eukaryota</taxon>
        <taxon>Viridiplantae</taxon>
        <taxon>Streptophyta</taxon>
        <taxon>Embryophyta</taxon>
        <taxon>Tracheophyta</taxon>
        <taxon>Spermatophyta</taxon>
        <taxon>Magnoliopsida</taxon>
        <taxon>Liliopsida</taxon>
        <taxon>Poales</taxon>
        <taxon>Poaceae</taxon>
        <taxon>BOP clade</taxon>
        <taxon>Oryzoideae</taxon>
        <taxon>Oryzeae</taxon>
        <taxon>Oryzinae</taxon>
        <taxon>Oryza</taxon>
        <taxon>Oryza sativa</taxon>
    </lineage>
</organism>
<accession>Q8H3I4</accession>
<accession>A0A0P0X8U9</accession>
<accession>B9FU85</accession>
<sequence>MEDNLPVNVREYQELAKKALPKMAYDYINGGAEDEHTLRENIAAYTRIILRPRVLVDVSKIDMSTTLLGYTMRSPIIVAPTGGHKLAHPEGEKATARAAASCNAIMVLSFSSSCKIEDVASSCNAIRFYQLYVYKNRNVSATLVRRAESCGFKALLLTVDTPMLGRREADIRNKMVFPRSGNLEGLMTTDDHDTTNGSQLERFARATLDPSLSWKDIEWLKSITSMPIFLKGIVTAEDARRAVEAGVAGVIVSNHGARQLDYAPATIAALEEVVRAVAGAVPVLVDGGIRRGTDVFKALALGARAVMVGRPVFFGLAARGEAGARHVIEMLNGELEVAMALCGCRSVGEITRSHVMTEGDRIRSLL</sequence>
<proteinExistence type="evidence at protein level"/>
<protein>
    <recommendedName>
        <fullName>Peroxisomal (S)-2-hydroxy-acid oxidase GLO4</fullName>
        <ecNumber evidence="3">1.1.3.15</ecNumber>
    </recommendedName>
    <alternativeName>
        <fullName>Glycolate oxidase 4</fullName>
        <shortName>GOX 4</shortName>
        <shortName>OsGLO4</shortName>
    </alternativeName>
    <alternativeName>
        <fullName>Short chain alpha-hydroxy acid oxidase GLO4</fullName>
    </alternativeName>
</protein>